<reference key="1">
    <citation type="journal article" date="1991" name="J. Exp. Med.">
        <title>Structure, expression, and T cell costimulatory activity of the murine homologue of the human B lymphocyte activation antigen B7.</title>
        <authorList>
            <person name="Freeman G.J."/>
            <person name="Gray G.S."/>
            <person name="Gimmi C.D."/>
            <person name="Lombard D.B."/>
            <person name="Zhou L.-J."/>
            <person name="White M."/>
            <person name="Fingeroth J.D."/>
            <person name="Gribben J.G."/>
            <person name="Nadler L.M."/>
        </authorList>
    </citation>
    <scope>NUCLEOTIDE SEQUENCE [MRNA] (ISOFORM 1)</scope>
    <source>
        <tissue>B-cell</tissue>
    </source>
</reference>
<reference key="2">
    <citation type="journal article" date="1993" name="Immunogenetics">
        <title>Genomic organization of the mouse B-lymphocyte activation antigen B7.</title>
        <authorList>
            <person name="Selvakumar A."/>
            <person name="White P.C."/>
            <person name="Dupont B."/>
        </authorList>
    </citation>
    <scope>NUCLEOTIDE SEQUENCE [GENOMIC DNA]</scope>
    <source>
        <tissue>B-cell</tissue>
    </source>
</reference>
<reference key="3">
    <citation type="journal article" date="1994" name="Biochem. Biophys. Res. Commun.">
        <title>Identification of an alternatively spliced form of the murine homologue of B7.</title>
        <authorList>
            <person name="Inobe M."/>
            <person name="Linsley P.S."/>
            <person name="Ledbetter J.A."/>
            <person name="Nagai Y."/>
            <person name="Tamakoshi M."/>
            <person name="Uede T."/>
        </authorList>
    </citation>
    <scope>NUCLEOTIDE SEQUENCE [MRNA] (ISOFORM 2)</scope>
    <source>
        <strain>C57BL/6J</strain>
        <tissue>Spleen</tissue>
    </source>
</reference>
<reference key="4">
    <citation type="journal article" date="2005" name="J. Immunol.">
        <title>CD80 cytoplasmic domain controls localization of CD28, CTLA-4, and protein kinase Ctheta in the immunological synapse.</title>
        <authorList>
            <person name="Tseng S.Y."/>
            <person name="Liu M."/>
            <person name="Dustin M.L."/>
        </authorList>
    </citation>
    <scope>FUNCTION</scope>
    <scope>SUBCELLULAR LOCATION</scope>
</reference>
<reference key="5">
    <citation type="journal article" date="2009" name="Mol. Cell. Proteomics">
        <title>The mouse C2C12 myoblast cell surface N-linked glycoproteome: identification, glycosite occupancy, and membrane orientation.</title>
        <authorList>
            <person name="Gundry R.L."/>
            <person name="Raginski K."/>
            <person name="Tarasova Y."/>
            <person name="Tchernyshyov I."/>
            <person name="Bausch-Fluck D."/>
            <person name="Elliott S.T."/>
            <person name="Boheler K.R."/>
            <person name="Van Eyk J.E."/>
            <person name="Wollscheid B."/>
        </authorList>
    </citation>
    <scope>GLYCOSYLATION [LARGE SCALE ANALYSIS] AT ASN-149; ASN-189; ASN-210 AND ASN-214</scope>
    <source>
        <tissue>Myoblast</tissue>
    </source>
</reference>
<reference key="6">
    <citation type="journal article" date="2012" name="J. Immunol.">
        <title>CD80 expression on B cells regulates murine T follicular helper development, germinal center B cell survival, and plasma cell generation.</title>
        <authorList>
            <person name="Good-Jacobson K.L."/>
            <person name="Song E."/>
            <person name="Anderson S."/>
            <person name="Sharpe A.H."/>
            <person name="Shlomchik M.J."/>
        </authorList>
    </citation>
    <scope>FUNCTION</scope>
    <scope>DISRUPTION PHENOTYPE</scope>
</reference>
<sequence length="306" mass="34590">MACNCQLMQDTPLLKFPCPRLILLFVLLIRLSQVSSDVDEQLSKSVKDKVLLPCRYNSPHEDESEDRIYWQKHDKVVLSVIAGKLKVWPEYKNRTLYDNTTYSLIILGLVLSDRGTYSCVVQKKERGTYEVKHLALVKLSIKADFSTPNITESGNPSADTKRITCFASGGFPKPRFSWLENGRELPGINTTISQDPESELYTISSQLDFNTTRNHTIKCLIKYGDAHVSEDFTWEKPPEDPPDSKNTLVLFGAGFGAVITVVVIVVIIKCFCKHRSCFRRNEASRETNNSLTFGPEEALAEQTVFL</sequence>
<proteinExistence type="evidence at protein level"/>
<accession>Q00609</accession>
<accession>Q61332</accession>
<protein>
    <recommendedName>
        <fullName>T-lymphocyte activation antigen CD80</fullName>
    </recommendedName>
    <alternativeName>
        <fullName>Activation B7-1 antigen</fullName>
        <shortName>B7</shortName>
    </alternativeName>
    <cdAntigenName>CD80</cdAntigenName>
</protein>
<name>CD80_MOUSE</name>
<organism>
    <name type="scientific">Mus musculus</name>
    <name type="common">Mouse</name>
    <dbReference type="NCBI Taxonomy" id="10090"/>
    <lineage>
        <taxon>Eukaryota</taxon>
        <taxon>Metazoa</taxon>
        <taxon>Chordata</taxon>
        <taxon>Craniata</taxon>
        <taxon>Vertebrata</taxon>
        <taxon>Euteleostomi</taxon>
        <taxon>Mammalia</taxon>
        <taxon>Eutheria</taxon>
        <taxon>Euarchontoglires</taxon>
        <taxon>Glires</taxon>
        <taxon>Rodentia</taxon>
        <taxon>Myomorpha</taxon>
        <taxon>Muroidea</taxon>
        <taxon>Muridae</taxon>
        <taxon>Murinae</taxon>
        <taxon>Mus</taxon>
        <taxon>Mus</taxon>
    </lineage>
</organism>
<gene>
    <name type="primary">Cd80</name>
    <name type="synonym">B7</name>
</gene>
<dbReference type="EMBL" id="X60958">
    <property type="protein sequence ID" value="CAA43291.1"/>
    <property type="molecule type" value="mRNA"/>
</dbReference>
<dbReference type="EMBL" id="L12589">
    <property type="protein sequence ID" value="AAA37240.1"/>
    <property type="status" value="ALT_SEQ"/>
    <property type="molecule type" value="Genomic_DNA"/>
</dbReference>
<dbReference type="EMBL" id="L12585">
    <property type="protein sequence ID" value="AAA37240.1"/>
    <property type="status" value="JOINED"/>
    <property type="molecule type" value="Genomic_DNA"/>
</dbReference>
<dbReference type="EMBL" id="L12586">
    <property type="protein sequence ID" value="AAA37240.1"/>
    <property type="status" value="JOINED"/>
    <property type="molecule type" value="Genomic_DNA"/>
</dbReference>
<dbReference type="EMBL" id="L12587">
    <property type="protein sequence ID" value="AAA37240.1"/>
    <property type="status" value="JOINED"/>
    <property type="molecule type" value="Genomic_DNA"/>
</dbReference>
<dbReference type="EMBL" id="L12588">
    <property type="protein sequence ID" value="AAA37240.1"/>
    <property type="status" value="JOINED"/>
    <property type="molecule type" value="Genomic_DNA"/>
</dbReference>
<dbReference type="EMBL" id="D16220">
    <property type="protein sequence ID" value="BAA03748.1"/>
    <property type="molecule type" value="mRNA"/>
</dbReference>
<dbReference type="CCDS" id="CCDS28168.1">
    <molecule id="Q00609-1"/>
</dbReference>
<dbReference type="PIR" id="I49503">
    <property type="entry name" value="I49503"/>
</dbReference>
<dbReference type="RefSeq" id="NP_001346827.1">
    <molecule id="Q00609-1"/>
    <property type="nucleotide sequence ID" value="NM_001359898.1"/>
</dbReference>
<dbReference type="RefSeq" id="NP_033985.3">
    <molecule id="Q00609-1"/>
    <property type="nucleotide sequence ID" value="NM_009855.2"/>
</dbReference>
<dbReference type="PDB" id="4RWH">
    <property type="method" value="X-ray"/>
    <property type="resolution" value="1.80 A"/>
    <property type="chains" value="A=40-144"/>
</dbReference>
<dbReference type="PDBsum" id="4RWH"/>
<dbReference type="SMR" id="Q00609"/>
<dbReference type="BioGRID" id="198612">
    <property type="interactions" value="1"/>
</dbReference>
<dbReference type="FunCoup" id="Q00609">
    <property type="interactions" value="203"/>
</dbReference>
<dbReference type="IntAct" id="Q00609">
    <property type="interactions" value="1"/>
</dbReference>
<dbReference type="STRING" id="10090.ENSMUSP00000156031"/>
<dbReference type="GlyCosmos" id="Q00609">
    <property type="glycosylation" value="6 sites, No reported glycans"/>
</dbReference>
<dbReference type="GlyGen" id="Q00609">
    <property type="glycosylation" value="6 sites"/>
</dbReference>
<dbReference type="iPTMnet" id="Q00609"/>
<dbReference type="PhosphoSitePlus" id="Q00609"/>
<dbReference type="SwissPalm" id="Q00609"/>
<dbReference type="PaxDb" id="10090-ENSMUSP00000097404"/>
<dbReference type="ProteomicsDB" id="265628">
    <molecule id="Q00609-1"/>
</dbReference>
<dbReference type="ProteomicsDB" id="265629">
    <molecule id="Q00609-2"/>
</dbReference>
<dbReference type="Antibodypedia" id="16574">
    <property type="antibodies" value="2389 antibodies from 53 providers"/>
</dbReference>
<dbReference type="DNASU" id="12519"/>
<dbReference type="Ensembl" id="ENSMUST00000099816.3">
    <molecule id="Q00609-1"/>
    <property type="protein sequence ID" value="ENSMUSP00000097404.3"/>
    <property type="gene ID" value="ENSMUSG00000075122.6"/>
</dbReference>
<dbReference type="Ensembl" id="ENSMUST00000231716.2">
    <molecule id="Q00609-1"/>
    <property type="protein sequence ID" value="ENSMUSP00000156031.2"/>
    <property type="gene ID" value="ENSMUSG00000075122.6"/>
</dbReference>
<dbReference type="Ensembl" id="ENSMUST00000232409.2">
    <molecule id="Q00609-2"/>
    <property type="protein sequence ID" value="ENSMUSP00000156252.2"/>
    <property type="gene ID" value="ENSMUSG00000075122.6"/>
</dbReference>
<dbReference type="GeneID" id="12519"/>
<dbReference type="KEGG" id="mmu:12519"/>
<dbReference type="UCSC" id="uc007zez.2">
    <molecule id="Q00609-1"/>
    <property type="organism name" value="mouse"/>
</dbReference>
<dbReference type="UCSC" id="uc012afo.1">
    <molecule id="Q00609-2"/>
    <property type="organism name" value="mouse"/>
</dbReference>
<dbReference type="AGR" id="MGI:101775"/>
<dbReference type="CTD" id="941"/>
<dbReference type="MGI" id="MGI:101775">
    <property type="gene designation" value="Cd80"/>
</dbReference>
<dbReference type="VEuPathDB" id="HostDB:ENSMUSG00000075122"/>
<dbReference type="eggNOG" id="ENOG502S5B5">
    <property type="taxonomic scope" value="Eukaryota"/>
</dbReference>
<dbReference type="GeneTree" id="ENSGT00940000162632"/>
<dbReference type="HOGENOM" id="CLU_071073_2_0_1"/>
<dbReference type="InParanoid" id="Q00609"/>
<dbReference type="OMA" id="HMTSVML"/>
<dbReference type="OrthoDB" id="9904387at2759"/>
<dbReference type="PhylomeDB" id="Q00609"/>
<dbReference type="TreeFam" id="TF351094"/>
<dbReference type="Reactome" id="R-MMU-1257604">
    <property type="pathway name" value="PIP3 activates AKT signaling"/>
</dbReference>
<dbReference type="Reactome" id="R-MMU-389356">
    <property type="pathway name" value="Co-stimulation by CD28"/>
</dbReference>
<dbReference type="Reactome" id="R-MMU-389357">
    <property type="pathway name" value="CD28 dependent PI3K/Akt signaling"/>
</dbReference>
<dbReference type="Reactome" id="R-MMU-389359">
    <property type="pathway name" value="CD28 dependent Vav1 pathway"/>
</dbReference>
<dbReference type="Reactome" id="R-MMU-389513">
    <property type="pathway name" value="Co-inhibition by CTLA4"/>
</dbReference>
<dbReference type="Reactome" id="R-MMU-6811558">
    <property type="pathway name" value="PI5P, PP2A and IER3 Regulate PI3K/AKT Signaling"/>
</dbReference>
<dbReference type="BioGRID-ORCS" id="12519">
    <property type="hits" value="1 hit in 81 CRISPR screens"/>
</dbReference>
<dbReference type="ChiTaRS" id="Cd80">
    <property type="organism name" value="mouse"/>
</dbReference>
<dbReference type="EvolutionaryTrace" id="Q00609"/>
<dbReference type="PRO" id="PR:Q00609"/>
<dbReference type="Proteomes" id="UP000000589">
    <property type="component" value="Chromosome 16"/>
</dbReference>
<dbReference type="RNAct" id="Q00609">
    <property type="molecule type" value="protein"/>
</dbReference>
<dbReference type="Bgee" id="ENSMUSG00000075122">
    <property type="expression patterns" value="Expressed in granulocyte and 69 other cell types or tissues"/>
</dbReference>
<dbReference type="ExpressionAtlas" id="Q00609">
    <property type="expression patterns" value="baseline and differential"/>
</dbReference>
<dbReference type="GO" id="GO:0009897">
    <property type="term" value="C:external side of plasma membrane"/>
    <property type="evidence" value="ECO:0000314"/>
    <property type="project" value="MGI"/>
</dbReference>
<dbReference type="GO" id="GO:0098636">
    <property type="term" value="C:protein complex involved in cell adhesion"/>
    <property type="evidence" value="ECO:0000266"/>
    <property type="project" value="MGI"/>
</dbReference>
<dbReference type="GO" id="GO:0015026">
    <property type="term" value="F:coreceptor activity"/>
    <property type="evidence" value="ECO:0007669"/>
    <property type="project" value="InterPro"/>
</dbReference>
<dbReference type="GO" id="GO:0071222">
    <property type="term" value="P:cellular response to lipopolysaccharide"/>
    <property type="evidence" value="ECO:0000314"/>
    <property type="project" value="MGI"/>
</dbReference>
<dbReference type="GO" id="GO:0046641">
    <property type="term" value="P:positive regulation of alpha-beta T cell proliferation"/>
    <property type="evidence" value="ECO:0000314"/>
    <property type="project" value="MGI"/>
</dbReference>
<dbReference type="GO" id="GO:0042102">
    <property type="term" value="P:positive regulation of T cell proliferation"/>
    <property type="evidence" value="ECO:0000316"/>
    <property type="project" value="MGI"/>
</dbReference>
<dbReference type="GO" id="GO:0031295">
    <property type="term" value="P:T cell costimulation"/>
    <property type="evidence" value="ECO:0000314"/>
    <property type="project" value="MGI"/>
</dbReference>
<dbReference type="CDD" id="cd16083">
    <property type="entry name" value="IgC1_CD80"/>
    <property type="match status" value="1"/>
</dbReference>
<dbReference type="CDD" id="cd16086">
    <property type="entry name" value="IgV_CD80"/>
    <property type="match status" value="1"/>
</dbReference>
<dbReference type="FunFam" id="2.60.40.10:FF:000910">
    <property type="entry name" value="T-lymphocyte activation antigen CD80"/>
    <property type="match status" value="1"/>
</dbReference>
<dbReference type="FunFam" id="2.60.40.10:FF:001077">
    <property type="entry name" value="T-lymphocyte activation antigen CD80"/>
    <property type="match status" value="1"/>
</dbReference>
<dbReference type="Gene3D" id="2.60.40.10">
    <property type="entry name" value="Immunoglobulins"/>
    <property type="match status" value="2"/>
</dbReference>
<dbReference type="InterPro" id="IPR013162">
    <property type="entry name" value="CD80_C2-set"/>
</dbReference>
<dbReference type="InterPro" id="IPR037676">
    <property type="entry name" value="CD80_IgC"/>
</dbReference>
<dbReference type="InterPro" id="IPR042711">
    <property type="entry name" value="CD80_IgV"/>
</dbReference>
<dbReference type="InterPro" id="IPR007110">
    <property type="entry name" value="Ig-like_dom"/>
</dbReference>
<dbReference type="InterPro" id="IPR036179">
    <property type="entry name" value="Ig-like_dom_sf"/>
</dbReference>
<dbReference type="InterPro" id="IPR013783">
    <property type="entry name" value="Ig-like_fold"/>
</dbReference>
<dbReference type="InterPro" id="IPR003599">
    <property type="entry name" value="Ig_sub"/>
</dbReference>
<dbReference type="InterPro" id="IPR013106">
    <property type="entry name" value="Ig_V-set"/>
</dbReference>
<dbReference type="InterPro" id="IPR051713">
    <property type="entry name" value="T-cell_Activation_Regulation"/>
</dbReference>
<dbReference type="PANTHER" id="PTHR25466">
    <property type="entry name" value="T-LYMPHOCYTE ACTIVATION ANTIGEN"/>
    <property type="match status" value="1"/>
</dbReference>
<dbReference type="PANTHER" id="PTHR25466:SF4">
    <property type="entry name" value="T-LYMPHOCYTE ACTIVATION ANTIGEN CD80"/>
    <property type="match status" value="1"/>
</dbReference>
<dbReference type="Pfam" id="PF08205">
    <property type="entry name" value="C2-set_2"/>
    <property type="match status" value="1"/>
</dbReference>
<dbReference type="Pfam" id="PF07686">
    <property type="entry name" value="V-set"/>
    <property type="match status" value="1"/>
</dbReference>
<dbReference type="SMART" id="SM00409">
    <property type="entry name" value="IG"/>
    <property type="match status" value="1"/>
</dbReference>
<dbReference type="SUPFAM" id="SSF48726">
    <property type="entry name" value="Immunoglobulin"/>
    <property type="match status" value="2"/>
</dbReference>
<dbReference type="PROSITE" id="PS50835">
    <property type="entry name" value="IG_LIKE"/>
    <property type="match status" value="2"/>
</dbReference>
<keyword id="KW-0002">3D-structure</keyword>
<keyword id="KW-0025">Alternative splicing</keyword>
<keyword id="KW-1003">Cell membrane</keyword>
<keyword id="KW-1015">Disulfide bond</keyword>
<keyword id="KW-0325">Glycoprotein</keyword>
<keyword id="KW-0393">Immunoglobulin domain</keyword>
<keyword id="KW-0472">Membrane</keyword>
<keyword id="KW-0675">Receptor</keyword>
<keyword id="KW-1185">Reference proteome</keyword>
<keyword id="KW-0732">Signal</keyword>
<keyword id="KW-0812">Transmembrane</keyword>
<keyword id="KW-1133">Transmembrane helix</keyword>
<feature type="signal peptide">
    <location>
        <begin position="1"/>
        <end position="37"/>
    </location>
</feature>
<feature type="chain" id="PRO_0000014548" description="T-lymphocyte activation antigen CD80">
    <location>
        <begin position="38"/>
        <end position="306"/>
    </location>
</feature>
<feature type="topological domain" description="Extracellular" evidence="2">
    <location>
        <begin position="38"/>
        <end position="246"/>
    </location>
</feature>
<feature type="transmembrane region" description="Helical" evidence="2">
    <location>
        <begin position="247"/>
        <end position="268"/>
    </location>
</feature>
<feature type="topological domain" description="Cytoplasmic" evidence="2">
    <location>
        <begin position="269"/>
        <end position="306"/>
    </location>
</feature>
<feature type="domain" description="Ig-like V-type">
    <location>
        <begin position="38"/>
        <end position="135"/>
    </location>
</feature>
<feature type="domain" description="Ig-like C2-type">
    <location>
        <begin position="148"/>
        <end position="229"/>
    </location>
</feature>
<feature type="region of interest" description="Ig-hinge-like" evidence="2">
    <location>
        <begin position="227"/>
        <end position="246"/>
    </location>
</feature>
<feature type="glycosylation site" description="N-linked (GlcNAc...) asparagine" evidence="2">
    <location>
        <position position="93"/>
    </location>
</feature>
<feature type="glycosylation site" description="N-linked (GlcNAc...) asparagine" evidence="2">
    <location>
        <position position="99"/>
    </location>
</feature>
<feature type="glycosylation site" description="N-linked (GlcNAc...) asparagine" evidence="5">
    <location>
        <position position="149"/>
    </location>
</feature>
<feature type="glycosylation site" description="N-linked (GlcNAc...) asparagine" evidence="5">
    <location>
        <position position="189"/>
    </location>
</feature>
<feature type="glycosylation site" description="N-linked (GlcNAc...) asparagine" evidence="5">
    <location>
        <position position="210"/>
    </location>
</feature>
<feature type="glycosylation site" description="N-linked (GlcNAc...) asparagine" evidence="5">
    <location>
        <position position="214"/>
    </location>
</feature>
<feature type="disulfide bond" evidence="3">
    <location>
        <begin position="54"/>
        <end position="119"/>
    </location>
</feature>
<feature type="disulfide bond" evidence="3">
    <location>
        <begin position="165"/>
        <end position="219"/>
    </location>
</feature>
<feature type="splice variant" id="VSP_012552" description="In isoform 2." evidence="7">
    <location>
        <begin position="144"/>
        <end position="237"/>
    </location>
</feature>
<feature type="strand" evidence="8">
    <location>
        <begin position="40"/>
        <end position="45"/>
    </location>
</feature>
<feature type="strand" evidence="8">
    <location>
        <begin position="50"/>
        <end position="52"/>
    </location>
</feature>
<feature type="turn" evidence="8">
    <location>
        <begin position="63"/>
        <end position="65"/>
    </location>
</feature>
<feature type="strand" evidence="8">
    <location>
        <begin position="67"/>
        <end position="72"/>
    </location>
</feature>
<feature type="strand" evidence="8">
    <location>
        <begin position="75"/>
        <end position="81"/>
    </location>
</feature>
<feature type="strand" evidence="8">
    <location>
        <begin position="84"/>
        <end position="87"/>
    </location>
</feature>
<feature type="helix" evidence="8">
    <location>
        <begin position="89"/>
        <end position="91"/>
    </location>
</feature>
<feature type="turn" evidence="8">
    <location>
        <begin position="92"/>
        <end position="94"/>
    </location>
</feature>
<feature type="strand" evidence="8">
    <location>
        <begin position="95"/>
        <end position="98"/>
    </location>
</feature>
<feature type="turn" evidence="8">
    <location>
        <begin position="99"/>
        <end position="102"/>
    </location>
</feature>
<feature type="strand" evidence="8">
    <location>
        <begin position="103"/>
        <end position="106"/>
    </location>
</feature>
<feature type="helix" evidence="8">
    <location>
        <begin position="111"/>
        <end position="113"/>
    </location>
</feature>
<feature type="strand" evidence="8">
    <location>
        <begin position="115"/>
        <end position="124"/>
    </location>
</feature>
<feature type="strand" evidence="8">
    <location>
        <begin position="129"/>
        <end position="142"/>
    </location>
</feature>
<evidence type="ECO:0000250" key="1">
    <source>
        <dbReference type="UniProtKB" id="P33681"/>
    </source>
</evidence>
<evidence type="ECO:0000255" key="2"/>
<evidence type="ECO:0000255" key="3">
    <source>
        <dbReference type="PROSITE-ProRule" id="PRU00114"/>
    </source>
</evidence>
<evidence type="ECO:0000269" key="4">
    <source>
    </source>
</evidence>
<evidence type="ECO:0000269" key="5">
    <source>
    </source>
</evidence>
<evidence type="ECO:0000269" key="6">
    <source>
    </source>
</evidence>
<evidence type="ECO:0000303" key="7">
    <source>
    </source>
</evidence>
<evidence type="ECO:0007829" key="8">
    <source>
        <dbReference type="PDB" id="4RWH"/>
    </source>
</evidence>
<comment type="function">
    <text evidence="1 4 6">Costimulatory molecule that belongs to the immunoglobulin superfamily that plays an important role in T-lymphocyte activation. Acts as the primary auxiliary signal augmenting the MHC/TCR signal in naive T-cells together with the CD28 receptor which is constitutively expressed on the cell surface of T-cells (PubMed:16339518). In turn, activates different signaling pathways such as NF-kappa-B or MAPK leading to the production of different cytokines. In addition, CD28/CD80 costimulatory signal stimulates glucose metabolism and ATP synthesis of T-cells by activating the PI3K/Akt signaling pathway. Acts also as a regulator of PDL1/PDCD1 interactions to limit excess engagement of PDL1 and its inhibitory role in immune responses. Expressed on B-cells, plays a critical role in regulating interactions between B-cells and T-cells in both early and late germinal center responses, which are crucial for the generation of effective humoral immune responses (PubMed:22450810).</text>
</comment>
<comment type="subunit">
    <text evidence="1">Homodimer. Interacts with CTLA4; this interaction inhibits T-cell activation. Interacts with PDL1/CD274; this interaction blocks PDL1/PDCD1 binding and thus PDL1 inhibitory function. Interacts with CD28.</text>
</comment>
<comment type="interaction">
    <interactant intactId="EBI-5258929">
        <id>Q00609</id>
    </interactant>
    <interactant intactId="EBI-5258879">
        <id>Q9EP73</id>
        <label>Cd274</label>
    </interactant>
    <organismsDiffer>false</organismsDiffer>
    <experiments>7</experiments>
</comment>
<comment type="subcellular location">
    <subcellularLocation>
        <location evidence="4">Cell membrane</location>
        <topology evidence="1">Single-pass type I membrane protein</topology>
    </subcellularLocation>
</comment>
<comment type="alternative products">
    <event type="alternative splicing"/>
    <isoform>
        <id>Q00609-1</id>
        <name>1</name>
        <sequence type="displayed"/>
    </isoform>
    <isoform>
        <id>Q00609-2</id>
        <name>2</name>
        <name>MB7-2</name>
        <sequence type="described" ref="VSP_012552"/>
    </isoform>
</comment>
<comment type="tissue specificity">
    <text>Expressed on activated B-cells, gamma interferon stimulated monocytes and non-circulating B-cell malignancies.</text>
</comment>
<comment type="developmental stage">
    <text>Expressed between 4 and 12 hours post-activation. Protein was detected at cell surface at 24 hours and it's expression was maximal from 48 to 72 hours post-activation.</text>
</comment>
<comment type="disruption phenotype">
    <text evidence="6">CD80-deletion mice have fewer T-follicular helper cells compared to WT, and residual T-follicular helper cells fail to mature.</text>
</comment>